<organism>
    <name type="scientific">Mycolicibacterium paratuberculosis (strain ATCC BAA-968 / K-10)</name>
    <name type="common">Mycobacterium paratuberculosis</name>
    <dbReference type="NCBI Taxonomy" id="262316"/>
    <lineage>
        <taxon>Bacteria</taxon>
        <taxon>Bacillati</taxon>
        <taxon>Actinomycetota</taxon>
        <taxon>Actinomycetes</taxon>
        <taxon>Mycobacteriales</taxon>
        <taxon>Mycobacteriaceae</taxon>
        <taxon>Mycobacterium</taxon>
        <taxon>Mycobacterium avium complex (MAC)</taxon>
    </lineage>
</organism>
<evidence type="ECO:0000250" key="1"/>
<evidence type="ECO:0000255" key="2"/>
<evidence type="ECO:0000256" key="3">
    <source>
        <dbReference type="SAM" id="MobiDB-lite"/>
    </source>
</evidence>
<evidence type="ECO:0000305" key="4"/>
<sequence length="353" mass="39247">MDLLFDFFSLDFVYYPVSWIMWVWYKLFAAMLGPSNFFAWALSVMFLVFTLRALLYKPFVRQIRTTRQMQELQPQIKALQKKYGKDRQRMALEMQKLQREHGFNPILGCLPMLAQIPVFLGLYHVLRSFNRTTGGFGQPHLSVVQNRLTGNYVFTPTDVGHFLDANLFGAPIGAFMTQRTGLDAFTYFSRPAVIAVGLPVMILAGVATYFNSRASVARQSPEAAANPQTAMMNKLALYVFPLGVVVGGPFLPLAIILYWFANNIWTFGQQHYVFGMIEKEDEAKKQEAIQRRAANAPAPGAKPKRNLKAGAGNGVDADAAQPDAGATEGQAGGGSDAPSRTPRPGARPKKRKR</sequence>
<protein>
    <recommendedName>
        <fullName>Membrane protein insertase YidC</fullName>
    </recommendedName>
    <alternativeName>
        <fullName>Foldase YidC</fullName>
    </alternativeName>
    <alternativeName>
        <fullName>Membrane integrase YidC</fullName>
    </alternativeName>
    <alternativeName>
        <fullName>Membrane protein YidC</fullName>
    </alternativeName>
</protein>
<feature type="chain" id="PRO_0000124726" description="Membrane protein insertase YidC">
    <location>
        <begin position="1"/>
        <end position="353"/>
    </location>
</feature>
<feature type="transmembrane region" description="Helical" evidence="2">
    <location>
        <begin position="3"/>
        <end position="23"/>
    </location>
</feature>
<feature type="transmembrane region" description="Helical" evidence="2">
    <location>
        <begin position="28"/>
        <end position="48"/>
    </location>
</feature>
<feature type="transmembrane region" description="Helical" evidence="2">
    <location>
        <begin position="106"/>
        <end position="126"/>
    </location>
</feature>
<feature type="transmembrane region" description="Helical" evidence="2">
    <location>
        <begin position="191"/>
        <end position="211"/>
    </location>
</feature>
<feature type="transmembrane region" description="Helical" evidence="2">
    <location>
        <begin position="237"/>
        <end position="257"/>
    </location>
</feature>
<feature type="region of interest" description="Disordered" evidence="3">
    <location>
        <begin position="285"/>
        <end position="353"/>
    </location>
</feature>
<feature type="compositionally biased region" description="Low complexity" evidence="3">
    <location>
        <begin position="291"/>
        <end position="301"/>
    </location>
</feature>
<keyword id="KW-1003">Cell membrane</keyword>
<keyword id="KW-0143">Chaperone</keyword>
<keyword id="KW-0472">Membrane</keyword>
<keyword id="KW-0653">Protein transport</keyword>
<keyword id="KW-1185">Reference proteome</keyword>
<keyword id="KW-0812">Transmembrane</keyword>
<keyword id="KW-1133">Transmembrane helix</keyword>
<keyword id="KW-0813">Transport</keyword>
<comment type="function">
    <text evidence="1">Required for the insertion and/or proper folding and/or complex formation of integral membrane proteins into the membrane. Involved in integration of membrane proteins that insert both dependently and independently of the Sec translocase complex, as well as at least some lipoproteins. Aids folding of multispanning membrane proteins (By similarity).</text>
</comment>
<comment type="subunit">
    <text evidence="1">Interacts with the Sec translocase complex via SecD. Specifically interacts with transmembrane segments of nascent integral membrane proteins during membrane integration (By similarity).</text>
</comment>
<comment type="subcellular location">
    <subcellularLocation>
        <location evidence="1">Cell membrane</location>
        <topology evidence="1">Multi-pass membrane protein</topology>
    </subcellularLocation>
</comment>
<comment type="similarity">
    <text evidence="4">Belongs to the OXA1/ALB3/YidC family. Type 1 subfamily.</text>
</comment>
<accession>Q9L7M1</accession>
<dbReference type="EMBL" id="AF222789">
    <property type="protein sequence ID" value="AAF33698.1"/>
    <property type="molecule type" value="Genomic_DNA"/>
</dbReference>
<dbReference type="EMBL" id="AE016958">
    <property type="protein sequence ID" value="AAS06897.1"/>
    <property type="molecule type" value="Genomic_DNA"/>
</dbReference>
<dbReference type="SMR" id="Q9L7M1"/>
<dbReference type="STRING" id="262316.MAP_4347c"/>
<dbReference type="KEGG" id="mpa:MAP_4347c"/>
<dbReference type="eggNOG" id="COG0706">
    <property type="taxonomic scope" value="Bacteria"/>
</dbReference>
<dbReference type="HOGENOM" id="CLU_036138_3_0_11"/>
<dbReference type="Proteomes" id="UP000000580">
    <property type="component" value="Chromosome"/>
</dbReference>
<dbReference type="GO" id="GO:0005886">
    <property type="term" value="C:plasma membrane"/>
    <property type="evidence" value="ECO:0007669"/>
    <property type="project" value="UniProtKB-SubCell"/>
</dbReference>
<dbReference type="GO" id="GO:0032977">
    <property type="term" value="F:membrane insertase activity"/>
    <property type="evidence" value="ECO:0007669"/>
    <property type="project" value="InterPro"/>
</dbReference>
<dbReference type="GO" id="GO:0051205">
    <property type="term" value="P:protein insertion into membrane"/>
    <property type="evidence" value="ECO:0007669"/>
    <property type="project" value="TreeGrafter"/>
</dbReference>
<dbReference type="GO" id="GO:0015031">
    <property type="term" value="P:protein transport"/>
    <property type="evidence" value="ECO:0007669"/>
    <property type="project" value="UniProtKB-KW"/>
</dbReference>
<dbReference type="CDD" id="cd20070">
    <property type="entry name" value="5TM_YidC_Alb3"/>
    <property type="match status" value="1"/>
</dbReference>
<dbReference type="InterPro" id="IPR001708">
    <property type="entry name" value="YidC/ALB3/OXA1/COX18"/>
</dbReference>
<dbReference type="InterPro" id="IPR028055">
    <property type="entry name" value="YidC/Oxa/ALB_C"/>
</dbReference>
<dbReference type="InterPro" id="IPR047196">
    <property type="entry name" value="YidC_ALB_C"/>
</dbReference>
<dbReference type="NCBIfam" id="NF002899">
    <property type="entry name" value="PRK03449.1"/>
    <property type="match status" value="1"/>
</dbReference>
<dbReference type="NCBIfam" id="TIGR03592">
    <property type="entry name" value="yidC_oxa1_cterm"/>
    <property type="match status" value="1"/>
</dbReference>
<dbReference type="PANTHER" id="PTHR12428:SF65">
    <property type="entry name" value="CYTOCHROME C OXIDASE ASSEMBLY PROTEIN COX18, MITOCHONDRIAL"/>
    <property type="match status" value="1"/>
</dbReference>
<dbReference type="PANTHER" id="PTHR12428">
    <property type="entry name" value="OXA1"/>
    <property type="match status" value="1"/>
</dbReference>
<dbReference type="Pfam" id="PF02096">
    <property type="entry name" value="60KD_IMP"/>
    <property type="match status" value="1"/>
</dbReference>
<reference key="1">
    <citation type="journal article" date="2003" name="BMC Microbiol.">
        <title>Genomic homogeneity between Mycobacterium avium subsp. avium and Mycobacterium avium subsp. paratuberculosis belies their divergent growth rates.</title>
        <authorList>
            <person name="Bannantine J.P."/>
            <person name="Zhang Q."/>
            <person name="Li L.L."/>
            <person name="Kapur V."/>
        </authorList>
    </citation>
    <scope>NUCLEOTIDE SEQUENCE [GENOMIC DNA]</scope>
    <source>
        <strain>ATCC BAA-968 / K-10</strain>
    </source>
</reference>
<reference key="2">
    <citation type="journal article" date="2005" name="Proc. Natl. Acad. Sci. U.S.A.">
        <title>The complete genome sequence of Mycobacterium avium subspecies paratuberculosis.</title>
        <authorList>
            <person name="Li L."/>
            <person name="Bannantine J.P."/>
            <person name="Zhang Q."/>
            <person name="Amonsin A."/>
            <person name="May B.J."/>
            <person name="Alt D."/>
            <person name="Banerji N."/>
            <person name="Kanjilal S."/>
            <person name="Kapur V."/>
        </authorList>
    </citation>
    <scope>NUCLEOTIDE SEQUENCE [LARGE SCALE GENOMIC DNA]</scope>
    <source>
        <strain>ATCC BAA-968 / K-10</strain>
    </source>
</reference>
<gene>
    <name type="primary">yidC</name>
    <name type="ordered locus">MAP_4347c</name>
</gene>
<proteinExistence type="inferred from homology"/>
<name>YIDC_MYCPA</name>